<evidence type="ECO:0000255" key="1">
    <source>
        <dbReference type="HAMAP-Rule" id="MF_00658"/>
    </source>
</evidence>
<dbReference type="EC" id="2.1.1.177" evidence="1"/>
<dbReference type="EMBL" id="CP000916">
    <property type="protein sequence ID" value="ACM23907.1"/>
    <property type="molecule type" value="Genomic_DNA"/>
</dbReference>
<dbReference type="RefSeq" id="WP_015920145.1">
    <property type="nucleotide sequence ID" value="NC_011978.1"/>
</dbReference>
<dbReference type="SMR" id="B9KAC4"/>
<dbReference type="STRING" id="309803.CTN_1731"/>
<dbReference type="KEGG" id="tna:CTN_1731"/>
<dbReference type="eggNOG" id="COG1576">
    <property type="taxonomic scope" value="Bacteria"/>
</dbReference>
<dbReference type="HOGENOM" id="CLU_100552_2_0_0"/>
<dbReference type="Proteomes" id="UP000000445">
    <property type="component" value="Chromosome"/>
</dbReference>
<dbReference type="GO" id="GO:0005737">
    <property type="term" value="C:cytoplasm"/>
    <property type="evidence" value="ECO:0007669"/>
    <property type="project" value="UniProtKB-SubCell"/>
</dbReference>
<dbReference type="GO" id="GO:0070038">
    <property type="term" value="F:rRNA (pseudouridine-N3-)-methyltransferase activity"/>
    <property type="evidence" value="ECO:0007669"/>
    <property type="project" value="UniProtKB-UniRule"/>
</dbReference>
<dbReference type="CDD" id="cd18081">
    <property type="entry name" value="RlmH-like"/>
    <property type="match status" value="1"/>
</dbReference>
<dbReference type="Gene3D" id="3.40.1280.10">
    <property type="match status" value="1"/>
</dbReference>
<dbReference type="HAMAP" id="MF_00658">
    <property type="entry name" value="23SrRNA_methyltr_H"/>
    <property type="match status" value="1"/>
</dbReference>
<dbReference type="InterPro" id="IPR029028">
    <property type="entry name" value="Alpha/beta_knot_MTases"/>
</dbReference>
<dbReference type="InterPro" id="IPR003742">
    <property type="entry name" value="RlmH-like"/>
</dbReference>
<dbReference type="InterPro" id="IPR029026">
    <property type="entry name" value="tRNA_m1G_MTases_N"/>
</dbReference>
<dbReference type="PANTHER" id="PTHR33603">
    <property type="entry name" value="METHYLTRANSFERASE"/>
    <property type="match status" value="1"/>
</dbReference>
<dbReference type="PANTHER" id="PTHR33603:SF1">
    <property type="entry name" value="RIBOSOMAL RNA LARGE SUBUNIT METHYLTRANSFERASE H"/>
    <property type="match status" value="1"/>
</dbReference>
<dbReference type="Pfam" id="PF02590">
    <property type="entry name" value="SPOUT_MTase"/>
    <property type="match status" value="1"/>
</dbReference>
<dbReference type="PIRSF" id="PIRSF004505">
    <property type="entry name" value="MT_bac"/>
    <property type="match status" value="1"/>
</dbReference>
<dbReference type="SUPFAM" id="SSF75217">
    <property type="entry name" value="alpha/beta knot"/>
    <property type="match status" value="1"/>
</dbReference>
<proteinExistence type="inferred from homology"/>
<accession>B9KAC4</accession>
<name>RLMH_THENN</name>
<sequence length="151" mass="17500">MRIRIVVGGKLDNFIKMGVDHYKKFLRRFCKTEIIELKRTHGGSVEEIVKRETEELKKRVLPGSLMVVMDRRGENLSSEEFAGFLKEVEMKGKDITFLIGGPYGLSEEILSEAHRVFSLSRMTFTHGMSVLIVLEQVFRAFKIIRGENYHY</sequence>
<feature type="chain" id="PRO_1000199837" description="Ribosomal RNA large subunit methyltransferase H">
    <location>
        <begin position="1"/>
        <end position="151"/>
    </location>
</feature>
<feature type="binding site" evidence="1">
    <location>
        <position position="100"/>
    </location>
    <ligand>
        <name>S-adenosyl-L-methionine</name>
        <dbReference type="ChEBI" id="CHEBI:59789"/>
    </ligand>
</feature>
<feature type="binding site" evidence="1">
    <location>
        <begin position="119"/>
        <end position="124"/>
    </location>
    <ligand>
        <name>S-adenosyl-L-methionine</name>
        <dbReference type="ChEBI" id="CHEBI:59789"/>
    </ligand>
</feature>
<comment type="function">
    <text evidence="1">Specifically methylates the pseudouridine at position 1915 (m3Psi1915) in 23S rRNA.</text>
</comment>
<comment type="catalytic activity">
    <reaction evidence="1">
        <text>pseudouridine(1915) in 23S rRNA + S-adenosyl-L-methionine = N(3)-methylpseudouridine(1915) in 23S rRNA + S-adenosyl-L-homocysteine + H(+)</text>
        <dbReference type="Rhea" id="RHEA:42752"/>
        <dbReference type="Rhea" id="RHEA-COMP:10221"/>
        <dbReference type="Rhea" id="RHEA-COMP:10222"/>
        <dbReference type="ChEBI" id="CHEBI:15378"/>
        <dbReference type="ChEBI" id="CHEBI:57856"/>
        <dbReference type="ChEBI" id="CHEBI:59789"/>
        <dbReference type="ChEBI" id="CHEBI:65314"/>
        <dbReference type="ChEBI" id="CHEBI:74486"/>
        <dbReference type="EC" id="2.1.1.177"/>
    </reaction>
</comment>
<comment type="subunit">
    <text evidence="1">Homodimer.</text>
</comment>
<comment type="subcellular location">
    <subcellularLocation>
        <location evidence="1">Cytoplasm</location>
    </subcellularLocation>
</comment>
<comment type="similarity">
    <text evidence="1">Belongs to the RNA methyltransferase RlmH family.</text>
</comment>
<reference key="1">
    <citation type="submission" date="2007-11" db="EMBL/GenBank/DDBJ databases">
        <title>The genome sequence of the hyperthermophilic bacterium Thermotoga neapolitana.</title>
        <authorList>
            <person name="Lim S.K."/>
            <person name="Kim J.S."/>
            <person name="Cha S.H."/>
            <person name="Park B.C."/>
            <person name="Lee D.S."/>
            <person name="Tae H.S."/>
            <person name="Kim S.-J."/>
            <person name="Kim J.J."/>
            <person name="Park K.J."/>
            <person name="Lee S.Y."/>
        </authorList>
    </citation>
    <scope>NUCLEOTIDE SEQUENCE [LARGE SCALE GENOMIC DNA]</scope>
    <source>
        <strain>ATCC 49049 / DSM 4359 / NBRC 107923 / NS-E</strain>
    </source>
</reference>
<protein>
    <recommendedName>
        <fullName evidence="1">Ribosomal RNA large subunit methyltransferase H</fullName>
        <ecNumber evidence="1">2.1.1.177</ecNumber>
    </recommendedName>
    <alternativeName>
        <fullName evidence="1">23S rRNA (pseudouridine1915-N3)-methyltransferase</fullName>
    </alternativeName>
    <alternativeName>
        <fullName evidence="1">23S rRNA m3Psi1915 methyltransferase</fullName>
    </alternativeName>
    <alternativeName>
        <fullName evidence="1">rRNA (pseudouridine-N3-)-methyltransferase RlmH</fullName>
    </alternativeName>
</protein>
<keyword id="KW-0963">Cytoplasm</keyword>
<keyword id="KW-0489">Methyltransferase</keyword>
<keyword id="KW-0698">rRNA processing</keyword>
<keyword id="KW-0949">S-adenosyl-L-methionine</keyword>
<keyword id="KW-0808">Transferase</keyword>
<organism>
    <name type="scientific">Thermotoga neapolitana (strain ATCC 49049 / DSM 4359 / NBRC 107923 / NS-E)</name>
    <dbReference type="NCBI Taxonomy" id="309803"/>
    <lineage>
        <taxon>Bacteria</taxon>
        <taxon>Thermotogati</taxon>
        <taxon>Thermotogota</taxon>
        <taxon>Thermotogae</taxon>
        <taxon>Thermotogales</taxon>
        <taxon>Thermotogaceae</taxon>
        <taxon>Thermotoga</taxon>
    </lineage>
</organism>
<gene>
    <name evidence="1" type="primary">rlmH</name>
    <name type="ordered locus">CTN_1731</name>
</gene>